<gene>
    <name evidence="1" type="primary">ureC</name>
    <name type="ordered locus">Ent638_3466</name>
</gene>
<evidence type="ECO:0000255" key="1">
    <source>
        <dbReference type="HAMAP-Rule" id="MF_01953"/>
    </source>
</evidence>
<feature type="chain" id="PRO_1000070656" description="Urease subunit alpha">
    <location>
        <begin position="1"/>
        <end position="567"/>
    </location>
</feature>
<feature type="domain" description="Urease" evidence="1">
    <location>
        <begin position="129"/>
        <end position="567"/>
    </location>
</feature>
<feature type="active site" description="Proton donor" evidence="1">
    <location>
        <position position="320"/>
    </location>
</feature>
<feature type="binding site" evidence="1">
    <location>
        <position position="134"/>
    </location>
    <ligand>
        <name>Ni(2+)</name>
        <dbReference type="ChEBI" id="CHEBI:49786"/>
        <label>1</label>
    </ligand>
</feature>
<feature type="binding site" evidence="1">
    <location>
        <position position="136"/>
    </location>
    <ligand>
        <name>Ni(2+)</name>
        <dbReference type="ChEBI" id="CHEBI:49786"/>
        <label>1</label>
    </ligand>
</feature>
<feature type="binding site" description="via carbamate group" evidence="1">
    <location>
        <position position="217"/>
    </location>
    <ligand>
        <name>Ni(2+)</name>
        <dbReference type="ChEBI" id="CHEBI:49786"/>
        <label>1</label>
    </ligand>
</feature>
<feature type="binding site" description="via carbamate group" evidence="1">
    <location>
        <position position="217"/>
    </location>
    <ligand>
        <name>Ni(2+)</name>
        <dbReference type="ChEBI" id="CHEBI:49786"/>
        <label>2</label>
    </ligand>
</feature>
<feature type="binding site" evidence="1">
    <location>
        <position position="219"/>
    </location>
    <ligand>
        <name>substrate</name>
    </ligand>
</feature>
<feature type="binding site" evidence="1">
    <location>
        <position position="246"/>
    </location>
    <ligand>
        <name>Ni(2+)</name>
        <dbReference type="ChEBI" id="CHEBI:49786"/>
        <label>2</label>
    </ligand>
</feature>
<feature type="binding site" evidence="1">
    <location>
        <position position="272"/>
    </location>
    <ligand>
        <name>Ni(2+)</name>
        <dbReference type="ChEBI" id="CHEBI:49786"/>
        <label>2</label>
    </ligand>
</feature>
<feature type="binding site" evidence="1">
    <location>
        <position position="360"/>
    </location>
    <ligand>
        <name>Ni(2+)</name>
        <dbReference type="ChEBI" id="CHEBI:49786"/>
        <label>1</label>
    </ligand>
</feature>
<feature type="modified residue" description="N6-carboxylysine" evidence="1">
    <location>
        <position position="217"/>
    </location>
</feature>
<reference key="1">
    <citation type="journal article" date="2010" name="PLoS Genet.">
        <title>Genome sequence of the plant growth promoting endophytic bacterium Enterobacter sp. 638.</title>
        <authorList>
            <person name="Taghavi S."/>
            <person name="van der Lelie D."/>
            <person name="Hoffman A."/>
            <person name="Zhang Y.B."/>
            <person name="Walla M.D."/>
            <person name="Vangronsveld J."/>
            <person name="Newman L."/>
            <person name="Monchy S."/>
        </authorList>
    </citation>
    <scope>NUCLEOTIDE SEQUENCE [LARGE SCALE GENOMIC DNA]</scope>
    <source>
        <strain>638</strain>
    </source>
</reference>
<name>URE1_ENT38</name>
<accession>A4WEJ5</accession>
<keyword id="KW-0963">Cytoplasm</keyword>
<keyword id="KW-0378">Hydrolase</keyword>
<keyword id="KW-0479">Metal-binding</keyword>
<keyword id="KW-0533">Nickel</keyword>
<comment type="catalytic activity">
    <reaction evidence="1">
        <text>urea + 2 H2O + H(+) = hydrogencarbonate + 2 NH4(+)</text>
        <dbReference type="Rhea" id="RHEA:20557"/>
        <dbReference type="ChEBI" id="CHEBI:15377"/>
        <dbReference type="ChEBI" id="CHEBI:15378"/>
        <dbReference type="ChEBI" id="CHEBI:16199"/>
        <dbReference type="ChEBI" id="CHEBI:17544"/>
        <dbReference type="ChEBI" id="CHEBI:28938"/>
        <dbReference type="EC" id="3.5.1.5"/>
    </reaction>
</comment>
<comment type="cofactor">
    <cofactor evidence="1">
        <name>Ni cation</name>
        <dbReference type="ChEBI" id="CHEBI:25516"/>
    </cofactor>
    <text evidence="1">Binds 2 nickel ions per subunit.</text>
</comment>
<comment type="pathway">
    <text evidence="1">Nitrogen metabolism; urea degradation; CO(2) and NH(3) from urea (urease route): step 1/1.</text>
</comment>
<comment type="subunit">
    <text evidence="1">Heterotrimer of UreA (gamma), UreB (beta) and UreC (alpha) subunits. Three heterotrimers associate to form the active enzyme.</text>
</comment>
<comment type="subcellular location">
    <subcellularLocation>
        <location evidence="1">Cytoplasm</location>
    </subcellularLocation>
</comment>
<comment type="PTM">
    <text evidence="1">Carboxylation allows a single lysine to coordinate two nickel ions.</text>
</comment>
<comment type="similarity">
    <text evidence="1">Belongs to the metallo-dependent hydrolases superfamily. Urease alpha subunit family.</text>
</comment>
<protein>
    <recommendedName>
        <fullName evidence="1">Urease subunit alpha</fullName>
        <ecNumber evidence="1">3.5.1.5</ecNumber>
    </recommendedName>
    <alternativeName>
        <fullName evidence="1">Urea amidohydrolase subunit alpha</fullName>
    </alternativeName>
</protein>
<dbReference type="EC" id="3.5.1.5" evidence="1"/>
<dbReference type="EMBL" id="CP000653">
    <property type="protein sequence ID" value="ABP62125.1"/>
    <property type="molecule type" value="Genomic_DNA"/>
</dbReference>
<dbReference type="RefSeq" id="WP_015960453.1">
    <property type="nucleotide sequence ID" value="NC_009436.1"/>
</dbReference>
<dbReference type="SMR" id="A4WEJ5"/>
<dbReference type="STRING" id="399742.Ent638_3466"/>
<dbReference type="MEROPS" id="M38.982"/>
<dbReference type="KEGG" id="ent:Ent638_3466"/>
<dbReference type="eggNOG" id="COG0804">
    <property type="taxonomic scope" value="Bacteria"/>
</dbReference>
<dbReference type="HOGENOM" id="CLU_000980_0_0_6"/>
<dbReference type="OrthoDB" id="9802793at2"/>
<dbReference type="UniPathway" id="UPA00258">
    <property type="reaction ID" value="UER00370"/>
</dbReference>
<dbReference type="Proteomes" id="UP000000230">
    <property type="component" value="Chromosome"/>
</dbReference>
<dbReference type="GO" id="GO:0005737">
    <property type="term" value="C:cytoplasm"/>
    <property type="evidence" value="ECO:0007669"/>
    <property type="project" value="UniProtKB-SubCell"/>
</dbReference>
<dbReference type="GO" id="GO:0016151">
    <property type="term" value="F:nickel cation binding"/>
    <property type="evidence" value="ECO:0007669"/>
    <property type="project" value="UniProtKB-UniRule"/>
</dbReference>
<dbReference type="GO" id="GO:0009039">
    <property type="term" value="F:urease activity"/>
    <property type="evidence" value="ECO:0007669"/>
    <property type="project" value="UniProtKB-UniRule"/>
</dbReference>
<dbReference type="GO" id="GO:0043419">
    <property type="term" value="P:urea catabolic process"/>
    <property type="evidence" value="ECO:0007669"/>
    <property type="project" value="UniProtKB-UniRule"/>
</dbReference>
<dbReference type="CDD" id="cd00375">
    <property type="entry name" value="Urease_alpha"/>
    <property type="match status" value="1"/>
</dbReference>
<dbReference type="Gene3D" id="3.20.20.140">
    <property type="entry name" value="Metal-dependent hydrolases"/>
    <property type="match status" value="1"/>
</dbReference>
<dbReference type="Gene3D" id="2.30.40.10">
    <property type="entry name" value="Urease, subunit C, domain 1"/>
    <property type="match status" value="1"/>
</dbReference>
<dbReference type="HAMAP" id="MF_01953">
    <property type="entry name" value="Urease_alpha"/>
    <property type="match status" value="1"/>
</dbReference>
<dbReference type="InterPro" id="IPR006680">
    <property type="entry name" value="Amidohydro-rel"/>
</dbReference>
<dbReference type="InterPro" id="IPR011059">
    <property type="entry name" value="Metal-dep_hydrolase_composite"/>
</dbReference>
<dbReference type="InterPro" id="IPR032466">
    <property type="entry name" value="Metal_Hydrolase"/>
</dbReference>
<dbReference type="InterPro" id="IPR011612">
    <property type="entry name" value="Urease_alpha_N_dom"/>
</dbReference>
<dbReference type="InterPro" id="IPR050112">
    <property type="entry name" value="Urease_alpha_subunit"/>
</dbReference>
<dbReference type="InterPro" id="IPR017950">
    <property type="entry name" value="Urease_AS"/>
</dbReference>
<dbReference type="InterPro" id="IPR005848">
    <property type="entry name" value="Urease_asu"/>
</dbReference>
<dbReference type="InterPro" id="IPR017951">
    <property type="entry name" value="Urease_asu_c"/>
</dbReference>
<dbReference type="InterPro" id="IPR029754">
    <property type="entry name" value="Urease_Ni-bd"/>
</dbReference>
<dbReference type="NCBIfam" id="NF009685">
    <property type="entry name" value="PRK13206.1"/>
    <property type="match status" value="1"/>
</dbReference>
<dbReference type="NCBIfam" id="NF009686">
    <property type="entry name" value="PRK13207.1"/>
    <property type="match status" value="1"/>
</dbReference>
<dbReference type="NCBIfam" id="TIGR01792">
    <property type="entry name" value="urease_alph"/>
    <property type="match status" value="1"/>
</dbReference>
<dbReference type="PANTHER" id="PTHR43440">
    <property type="entry name" value="UREASE"/>
    <property type="match status" value="1"/>
</dbReference>
<dbReference type="PANTHER" id="PTHR43440:SF1">
    <property type="entry name" value="UREASE"/>
    <property type="match status" value="1"/>
</dbReference>
<dbReference type="Pfam" id="PF01979">
    <property type="entry name" value="Amidohydro_1"/>
    <property type="match status" value="1"/>
</dbReference>
<dbReference type="Pfam" id="PF00449">
    <property type="entry name" value="Urease_alpha"/>
    <property type="match status" value="1"/>
</dbReference>
<dbReference type="PRINTS" id="PR01752">
    <property type="entry name" value="UREASE"/>
</dbReference>
<dbReference type="SUPFAM" id="SSF51338">
    <property type="entry name" value="Composite domain of metallo-dependent hydrolases"/>
    <property type="match status" value="2"/>
</dbReference>
<dbReference type="SUPFAM" id="SSF51556">
    <property type="entry name" value="Metallo-dependent hydrolases"/>
    <property type="match status" value="1"/>
</dbReference>
<dbReference type="PROSITE" id="PS01120">
    <property type="entry name" value="UREASE_1"/>
    <property type="match status" value="1"/>
</dbReference>
<dbReference type="PROSITE" id="PS00145">
    <property type="entry name" value="UREASE_2"/>
    <property type="match status" value="1"/>
</dbReference>
<dbReference type="PROSITE" id="PS51368">
    <property type="entry name" value="UREASE_3"/>
    <property type="match status" value="1"/>
</dbReference>
<proteinExistence type="inferred from homology"/>
<sequence length="567" mass="60232">MAEISRQAYADMFGPTTGDKVRLADTDLWIEVENDLTIYGEEVKFGGGKVIRDGMGQGQMTAQDCVDLVLTNALIVDHWGIVKADIGVKDGRIFAVGKAGNPDIQPGVTIPIGAATEVIAAEGKIVTAGGIDTHIHWICPQQAEEALVSGVTTMIGGGTGPAAGTNATTCTPGPWYIARMLQAADTLPVNIGLLGKGNGSNPDALREQIAAGAIGLKIHEDWGSTPATINCSLSVAEEMDIQVALHSDTLNEAGFVEDTLAAIDGRTIHTFHTEGAGGGHAPDIITACAHPNILPSSTNPTLPYTVNTIDEHLDMLMVCHHLDPDIAEDVAFAESRIRRETIAAEDVLHDIGAFSLTSSDSQAMGRVGEVIIRTWQVAHRMKVQRGALAEESGDNDNFRAKRYVAKYTINPALTHGIAHEVGSVEAGKLADLVVWSPAFFGVKPATIVKGGMIACAPMGDINASIPTPQPVHYRPMFGSLGAARHATRLTFISQAADANRIPQQLNLQSAIAVVKGCRTVKKADMIHNGLQPNITVDAQTYEVRIDGELITSEPADVLPMAQRYFLF</sequence>
<organism>
    <name type="scientific">Enterobacter sp. (strain 638)</name>
    <dbReference type="NCBI Taxonomy" id="399742"/>
    <lineage>
        <taxon>Bacteria</taxon>
        <taxon>Pseudomonadati</taxon>
        <taxon>Pseudomonadota</taxon>
        <taxon>Gammaproteobacteria</taxon>
        <taxon>Enterobacterales</taxon>
        <taxon>Enterobacteriaceae</taxon>
        <taxon>Enterobacter</taxon>
    </lineage>
</organism>